<name>ADFA_BPR69</name>
<protein>
    <recommendedName>
        <fullName evidence="2">Anti-DarT factor A</fullName>
    </recommendedName>
</protein>
<proteinExistence type="evidence at protein level"/>
<gene>
    <name type="primary">adfA</name>
    <name evidence="2" type="synonym">61.2</name>
</gene>
<dbReference type="EMBL" id="AY303349">
    <property type="protein sequence ID" value="AAP75936.1"/>
    <property type="molecule type" value="Genomic_DNA"/>
</dbReference>
<dbReference type="RefSeq" id="NP_861724.1">
    <property type="nucleotide sequence ID" value="NC_004928.1"/>
</dbReference>
<dbReference type="GeneID" id="1494150"/>
<dbReference type="KEGG" id="vg:1494150"/>
<dbReference type="OrthoDB" id="9371at10239"/>
<dbReference type="Proteomes" id="UP000000876">
    <property type="component" value="Genome"/>
</dbReference>
<dbReference type="GO" id="GO:0052170">
    <property type="term" value="P:symbiont-mediated suppression of host innate immune response"/>
    <property type="evidence" value="ECO:0007669"/>
    <property type="project" value="UniProtKB-KW"/>
</dbReference>
<dbReference type="InterPro" id="IPR055608">
    <property type="entry name" value="AdfA-like"/>
</dbReference>
<dbReference type="Pfam" id="PF23813">
    <property type="entry name" value="AdfA"/>
    <property type="match status" value="1"/>
</dbReference>
<sequence length="212" mass="24319">MHKNAPFKYGKFPNAQCYNITPNENNNGYHIGVIFVIVKDNEIVAWADFKGTTYDVNPVPFTYYNIMDLAYDYNWFNHDTLAHIEGVGFDISYSSYSLCPMSRAHGKDASYLSIRKRVNFKRSTEYVGGLFVKDNKITRISYPLSVSQKDVDVDLDLTENNINRIASVYFDIDEKIVVCGYELPPEEKAEAIEVELEISVDDQIFNAFMNRG</sequence>
<feature type="chain" id="PRO_0000460475" description="Anti-DarT factor A">
    <location>
        <begin position="1"/>
        <end position="212"/>
    </location>
</feature>
<feature type="mutagenesis site" description="Confers resistance to host DarTG defense system." evidence="1">
    <original>R</original>
    <variation>H</variation>
    <variation>S</variation>
    <location>
        <position position="164"/>
    </location>
</feature>
<organism>
    <name type="scientific">Escherichia phage RB69</name>
    <name type="common">Bacteriophage RB69</name>
    <dbReference type="NCBI Taxonomy" id="12353"/>
    <lineage>
        <taxon>Viruses</taxon>
        <taxon>Duplodnaviria</taxon>
        <taxon>Heunggongvirae</taxon>
        <taxon>Uroviricota</taxon>
        <taxon>Caudoviricetes</taxon>
        <taxon>Straboviridae</taxon>
        <taxon>Tevenvirinae</taxon>
        <taxon>Mosigvirus</taxon>
        <taxon>Mosigvirus RB69</taxon>
    </lineage>
</organism>
<reference key="1">
    <citation type="submission" date="2003-05" db="EMBL/GenBank/DDBJ databases">
        <title>Enterobacteria phage RB69 complete genome.</title>
        <authorList>
            <person name="Petrov V."/>
            <person name="Nolan J."/>
            <person name="Chin D."/>
            <person name="Letarov A."/>
            <person name="Krisch H.M."/>
            <person name="Karam J.D."/>
        </authorList>
    </citation>
    <scope>NUCLEOTIDE SEQUENCE [LARGE SCALE GENOMIC DNA]</scope>
</reference>
<reference key="2">
    <citation type="journal article" date="2022" name="Nat. Microbiol.">
        <title>The DarTG toxin-antitoxin system provides phage defence by ADP-ribosylating viral DNA.</title>
        <authorList>
            <person name="LeRoux M."/>
            <person name="Srikant S."/>
            <person name="Teodoro G.I.C."/>
            <person name="Zhang T."/>
            <person name="Littlehale M.L."/>
            <person name="Doron S."/>
            <person name="Badiee M."/>
            <person name="Leung A.K.L."/>
            <person name="Sorek R."/>
            <person name="Laub M.T."/>
        </authorList>
    </citation>
    <scope>FUNCTION</scope>
    <scope>MUTAGENESIS OF ARG-164</scope>
</reference>
<keyword id="KW-0945">Host-virus interaction</keyword>
<keyword id="KW-1090">Inhibition of host innate immune response by virus</keyword>
<keyword id="KW-1185">Reference proteome</keyword>
<keyword id="KW-0899">Viral immunoevasion</keyword>
<accession>Q7Y5A4</accession>
<comment type="function">
    <text evidence="1">Plays a role in counteracting the host DarT defense system, when mutated at Arg-164.</text>
</comment>
<comment type="similarity">
    <text evidence="3">Belongs to the Anti-DarT factor A family.</text>
</comment>
<organismHost>
    <name type="scientific">Escherichia coli</name>
    <dbReference type="NCBI Taxonomy" id="562"/>
</organismHost>
<evidence type="ECO:0000269" key="1">
    <source>
    </source>
</evidence>
<evidence type="ECO:0000303" key="2">
    <source>
    </source>
</evidence>
<evidence type="ECO:0000305" key="3"/>